<sequence length="542" mass="60363">MVSLLRCPSSKPYSSLICSLTLGAVVALSGVAYAEETKPAETVPVVTPPKVISQPATKNQVRFTKTGAFDSDTVVKIAKRLAAKPYVALKDPLPAGLAKLSYDEYRDIRFNPTASIWRDQGVPFQMQMFHRGFYFQDLIEIAIVEGQNATHLAYEPKYFTAGEVITQALPNDDIGYSGFRIHNQLNTNGVFDELMVFQGASYFRALGKGNAYGLSSRGLALKTADAEGEEFPIFRAFWVERPYNDSNLIVVHALLDSPSVAGAYTFSVRPGDNTLIDVEATLFPRVELSKVGLAPSTSMFLHSLNGRHDTDDFRPEVHDSDGLLMLNGRGEHLWRPLANPRQLQVSAFSDNSPQGFGLIQRERDYASYQDLEAHYERRPSLWIEPVGNWGQGSVVLTEIPTESEIHDNIVSYWKPRQPIPAGSEFHFAYRMSWGEEPAAKVGAVHVSRSASGRADIAKATPRRLFVVDYQIEGPMTDEMPVAKVEASGGVVTNVVIARNAAKNGYRLAFELEPEDKELIELRAELKFPTPRQVETWLYRWTL</sequence>
<reference key="1">
    <citation type="submission" date="2008-12" db="EMBL/GenBank/DDBJ databases">
        <title>Complete sequence of chromosome of Shewanella baltica OS223.</title>
        <authorList>
            <consortium name="US DOE Joint Genome Institute"/>
            <person name="Lucas S."/>
            <person name="Copeland A."/>
            <person name="Lapidus A."/>
            <person name="Glavina del Rio T."/>
            <person name="Dalin E."/>
            <person name="Tice H."/>
            <person name="Bruce D."/>
            <person name="Goodwin L."/>
            <person name="Pitluck S."/>
            <person name="Chertkov O."/>
            <person name="Meincke L."/>
            <person name="Brettin T."/>
            <person name="Detter J.C."/>
            <person name="Han C."/>
            <person name="Kuske C.R."/>
            <person name="Larimer F."/>
            <person name="Land M."/>
            <person name="Hauser L."/>
            <person name="Kyrpides N."/>
            <person name="Ovchinnikova G."/>
            <person name="Brettar I."/>
            <person name="Rodrigues J."/>
            <person name="Konstantinidis K."/>
            <person name="Tiedje J."/>
        </authorList>
    </citation>
    <scope>NUCLEOTIDE SEQUENCE [LARGE SCALE GENOMIC DNA]</scope>
    <source>
        <strain>OS223</strain>
    </source>
</reference>
<dbReference type="EMBL" id="CP001252">
    <property type="protein sequence ID" value="ACK46892.1"/>
    <property type="molecule type" value="Genomic_DNA"/>
</dbReference>
<dbReference type="RefSeq" id="WP_006081391.1">
    <property type="nucleotide sequence ID" value="NC_011663.1"/>
</dbReference>
<dbReference type="SMR" id="B8E7D3"/>
<dbReference type="KEGG" id="sbp:Sbal223_2397"/>
<dbReference type="HOGENOM" id="CLU_023403_2_0_6"/>
<dbReference type="UniPathway" id="UPA00637"/>
<dbReference type="Proteomes" id="UP000002507">
    <property type="component" value="Chromosome"/>
</dbReference>
<dbReference type="GO" id="GO:0030288">
    <property type="term" value="C:outer membrane-bounded periplasmic space"/>
    <property type="evidence" value="ECO:0007669"/>
    <property type="project" value="TreeGrafter"/>
</dbReference>
<dbReference type="GO" id="GO:0030246">
    <property type="term" value="F:carbohydrate binding"/>
    <property type="evidence" value="ECO:0007669"/>
    <property type="project" value="InterPro"/>
</dbReference>
<dbReference type="GO" id="GO:0003824">
    <property type="term" value="F:catalytic activity"/>
    <property type="evidence" value="ECO:0007669"/>
    <property type="project" value="InterPro"/>
</dbReference>
<dbReference type="GO" id="GO:0051274">
    <property type="term" value="P:beta-glucan biosynthetic process"/>
    <property type="evidence" value="ECO:0007669"/>
    <property type="project" value="TreeGrafter"/>
</dbReference>
<dbReference type="FunFam" id="2.60.40.10:FF:001915">
    <property type="entry name" value="Glucans biosynthesis protein G"/>
    <property type="match status" value="1"/>
</dbReference>
<dbReference type="FunFam" id="2.70.98.10:FF:000001">
    <property type="entry name" value="Glucans biosynthesis protein G"/>
    <property type="match status" value="1"/>
</dbReference>
<dbReference type="Gene3D" id="2.70.98.10">
    <property type="match status" value="1"/>
</dbReference>
<dbReference type="Gene3D" id="2.60.40.10">
    <property type="entry name" value="Immunoglobulins"/>
    <property type="match status" value="1"/>
</dbReference>
<dbReference type="HAMAP" id="MF_01069">
    <property type="entry name" value="MdoG_OpgG"/>
    <property type="match status" value="1"/>
</dbReference>
<dbReference type="InterPro" id="IPR011013">
    <property type="entry name" value="Gal_mutarotase_sf_dom"/>
</dbReference>
<dbReference type="InterPro" id="IPR014718">
    <property type="entry name" value="GH-type_carb-bd"/>
</dbReference>
<dbReference type="InterPro" id="IPR014438">
    <property type="entry name" value="Glucan_biosyn_MdoG/MdoD"/>
</dbReference>
<dbReference type="InterPro" id="IPR007444">
    <property type="entry name" value="Glucan_biosyn_MdoG_C"/>
</dbReference>
<dbReference type="InterPro" id="IPR013783">
    <property type="entry name" value="Ig-like_fold"/>
</dbReference>
<dbReference type="InterPro" id="IPR014756">
    <property type="entry name" value="Ig_E-set"/>
</dbReference>
<dbReference type="InterPro" id="IPR023704">
    <property type="entry name" value="MdoG_OpgG"/>
</dbReference>
<dbReference type="PANTHER" id="PTHR30504">
    <property type="entry name" value="GLUCANS BIOSYNTHESIS PROTEIN"/>
    <property type="match status" value="1"/>
</dbReference>
<dbReference type="PANTHER" id="PTHR30504:SF2">
    <property type="entry name" value="GLUCANS BIOSYNTHESIS PROTEIN G"/>
    <property type="match status" value="1"/>
</dbReference>
<dbReference type="Pfam" id="PF04349">
    <property type="entry name" value="MdoG"/>
    <property type="match status" value="1"/>
</dbReference>
<dbReference type="PIRSF" id="PIRSF006281">
    <property type="entry name" value="MdoG"/>
    <property type="match status" value="1"/>
</dbReference>
<dbReference type="SUPFAM" id="SSF81296">
    <property type="entry name" value="E set domains"/>
    <property type="match status" value="1"/>
</dbReference>
<dbReference type="SUPFAM" id="SSF74650">
    <property type="entry name" value="Galactose mutarotase-like"/>
    <property type="match status" value="1"/>
</dbReference>
<accession>B8E7D3</accession>
<name>OPGG_SHEB2</name>
<comment type="function">
    <text evidence="1">Involved in the biosynthesis of osmoregulated periplasmic glucans (OPGs).</text>
</comment>
<comment type="pathway">
    <text evidence="1">Glycan metabolism; osmoregulated periplasmic glucan (OPG) biosynthesis.</text>
</comment>
<comment type="subcellular location">
    <subcellularLocation>
        <location evidence="1">Periplasm</location>
    </subcellularLocation>
</comment>
<comment type="similarity">
    <text evidence="1">Belongs to the OpgD/OpgG family.</text>
</comment>
<feature type="signal peptide" evidence="1">
    <location>
        <begin position="1"/>
        <end position="34"/>
    </location>
</feature>
<feature type="chain" id="PRO_5000423775" description="Glucans biosynthesis protein G">
    <location>
        <begin position="35"/>
        <end position="542"/>
    </location>
</feature>
<proteinExistence type="inferred from homology"/>
<organism>
    <name type="scientific">Shewanella baltica (strain OS223)</name>
    <dbReference type="NCBI Taxonomy" id="407976"/>
    <lineage>
        <taxon>Bacteria</taxon>
        <taxon>Pseudomonadati</taxon>
        <taxon>Pseudomonadota</taxon>
        <taxon>Gammaproteobacteria</taxon>
        <taxon>Alteromonadales</taxon>
        <taxon>Shewanellaceae</taxon>
        <taxon>Shewanella</taxon>
    </lineage>
</organism>
<gene>
    <name evidence="1" type="primary">opgG</name>
    <name type="ordered locus">Sbal223_2397</name>
</gene>
<evidence type="ECO:0000255" key="1">
    <source>
        <dbReference type="HAMAP-Rule" id="MF_01069"/>
    </source>
</evidence>
<keyword id="KW-0574">Periplasm</keyword>
<keyword id="KW-0732">Signal</keyword>
<protein>
    <recommendedName>
        <fullName evidence="1">Glucans biosynthesis protein G</fullName>
    </recommendedName>
</protein>